<accession>Q6D3U1</accession>
<reference key="1">
    <citation type="journal article" date="2004" name="Proc. Natl. Acad. Sci. U.S.A.">
        <title>Genome sequence of the enterobacterial phytopathogen Erwinia carotovora subsp. atroseptica and characterization of virulence factors.</title>
        <authorList>
            <person name="Bell K.S."/>
            <person name="Sebaihia M."/>
            <person name="Pritchard L."/>
            <person name="Holden M.T.G."/>
            <person name="Hyman L.J."/>
            <person name="Holeva M.C."/>
            <person name="Thomson N.R."/>
            <person name="Bentley S.D."/>
            <person name="Churcher L.J.C."/>
            <person name="Mungall K."/>
            <person name="Atkin R."/>
            <person name="Bason N."/>
            <person name="Brooks K."/>
            <person name="Chillingworth T."/>
            <person name="Clark K."/>
            <person name="Doggett J."/>
            <person name="Fraser A."/>
            <person name="Hance Z."/>
            <person name="Hauser H."/>
            <person name="Jagels K."/>
            <person name="Moule S."/>
            <person name="Norbertczak H."/>
            <person name="Ormond D."/>
            <person name="Price C."/>
            <person name="Quail M.A."/>
            <person name="Sanders M."/>
            <person name="Walker D."/>
            <person name="Whitehead S."/>
            <person name="Salmond G.P.C."/>
            <person name="Birch P.R.J."/>
            <person name="Parkhill J."/>
            <person name="Toth I.K."/>
        </authorList>
    </citation>
    <scope>NUCLEOTIDE SEQUENCE [LARGE SCALE GENOMIC DNA]</scope>
    <source>
        <strain>SCRI 1043 / ATCC BAA-672</strain>
    </source>
</reference>
<name>IF1_PECAS</name>
<organism>
    <name type="scientific">Pectobacterium atrosepticum (strain SCRI 1043 / ATCC BAA-672)</name>
    <name type="common">Erwinia carotovora subsp. atroseptica</name>
    <dbReference type="NCBI Taxonomy" id="218491"/>
    <lineage>
        <taxon>Bacteria</taxon>
        <taxon>Pseudomonadati</taxon>
        <taxon>Pseudomonadota</taxon>
        <taxon>Gammaproteobacteria</taxon>
        <taxon>Enterobacterales</taxon>
        <taxon>Pectobacteriaceae</taxon>
        <taxon>Pectobacterium</taxon>
    </lineage>
</organism>
<gene>
    <name evidence="1" type="primary">infA</name>
    <name type="ordered locus">ECA2653</name>
</gene>
<comment type="function">
    <text evidence="1">One of the essential components for the initiation of protein synthesis. Stabilizes the binding of IF-2 and IF-3 on the 30S subunit to which N-formylmethionyl-tRNA(fMet) subsequently binds. Helps modulate mRNA selection, yielding the 30S pre-initiation complex (PIC). Upon addition of the 50S ribosomal subunit IF-1, IF-2 and IF-3 are released leaving the mature 70S translation initiation complex.</text>
</comment>
<comment type="subunit">
    <text evidence="1">Component of the 30S ribosomal translation pre-initiation complex which assembles on the 30S ribosome in the order IF-2 and IF-3, IF-1 and N-formylmethionyl-tRNA(fMet); mRNA recruitment can occur at any time during PIC assembly.</text>
</comment>
<comment type="subcellular location">
    <subcellularLocation>
        <location evidence="1">Cytoplasm</location>
    </subcellularLocation>
</comment>
<comment type="similarity">
    <text evidence="1">Belongs to the IF-1 family.</text>
</comment>
<feature type="chain" id="PRO_0000095789" description="Translation initiation factor IF-1">
    <location>
        <begin position="1"/>
        <end position="72"/>
    </location>
</feature>
<feature type="domain" description="S1-like" evidence="1">
    <location>
        <begin position="1"/>
        <end position="72"/>
    </location>
</feature>
<keyword id="KW-0963">Cytoplasm</keyword>
<keyword id="KW-0396">Initiation factor</keyword>
<keyword id="KW-0648">Protein biosynthesis</keyword>
<keyword id="KW-1185">Reference proteome</keyword>
<keyword id="KW-0694">RNA-binding</keyword>
<keyword id="KW-0699">rRNA-binding</keyword>
<protein>
    <recommendedName>
        <fullName evidence="1">Translation initiation factor IF-1</fullName>
    </recommendedName>
</protein>
<evidence type="ECO:0000255" key="1">
    <source>
        <dbReference type="HAMAP-Rule" id="MF_00075"/>
    </source>
</evidence>
<dbReference type="EMBL" id="BX950851">
    <property type="protein sequence ID" value="CAG75553.1"/>
    <property type="molecule type" value="Genomic_DNA"/>
</dbReference>
<dbReference type="RefSeq" id="WP_002211347.1">
    <property type="nucleotide sequence ID" value="NC_004547.2"/>
</dbReference>
<dbReference type="SMR" id="Q6D3U1"/>
<dbReference type="STRING" id="218491.ECA2653"/>
<dbReference type="GeneID" id="98387575"/>
<dbReference type="KEGG" id="eca:ECA2653"/>
<dbReference type="eggNOG" id="COG0361">
    <property type="taxonomic scope" value="Bacteria"/>
</dbReference>
<dbReference type="HOGENOM" id="CLU_151267_1_0_6"/>
<dbReference type="OrthoDB" id="9803250at2"/>
<dbReference type="Proteomes" id="UP000007966">
    <property type="component" value="Chromosome"/>
</dbReference>
<dbReference type="GO" id="GO:0005829">
    <property type="term" value="C:cytosol"/>
    <property type="evidence" value="ECO:0007669"/>
    <property type="project" value="TreeGrafter"/>
</dbReference>
<dbReference type="GO" id="GO:0043022">
    <property type="term" value="F:ribosome binding"/>
    <property type="evidence" value="ECO:0007669"/>
    <property type="project" value="UniProtKB-UniRule"/>
</dbReference>
<dbReference type="GO" id="GO:0019843">
    <property type="term" value="F:rRNA binding"/>
    <property type="evidence" value="ECO:0007669"/>
    <property type="project" value="UniProtKB-UniRule"/>
</dbReference>
<dbReference type="GO" id="GO:0003743">
    <property type="term" value="F:translation initiation factor activity"/>
    <property type="evidence" value="ECO:0007669"/>
    <property type="project" value="UniProtKB-UniRule"/>
</dbReference>
<dbReference type="CDD" id="cd04451">
    <property type="entry name" value="S1_IF1"/>
    <property type="match status" value="1"/>
</dbReference>
<dbReference type="FunFam" id="2.40.50.140:FF:000002">
    <property type="entry name" value="Translation initiation factor IF-1"/>
    <property type="match status" value="1"/>
</dbReference>
<dbReference type="Gene3D" id="2.40.50.140">
    <property type="entry name" value="Nucleic acid-binding proteins"/>
    <property type="match status" value="1"/>
</dbReference>
<dbReference type="HAMAP" id="MF_00075">
    <property type="entry name" value="IF_1"/>
    <property type="match status" value="1"/>
</dbReference>
<dbReference type="InterPro" id="IPR012340">
    <property type="entry name" value="NA-bd_OB-fold"/>
</dbReference>
<dbReference type="InterPro" id="IPR006196">
    <property type="entry name" value="RNA-binding_domain_S1_IF1"/>
</dbReference>
<dbReference type="InterPro" id="IPR003029">
    <property type="entry name" value="S1_domain"/>
</dbReference>
<dbReference type="InterPro" id="IPR004368">
    <property type="entry name" value="TIF_IF1"/>
</dbReference>
<dbReference type="NCBIfam" id="TIGR00008">
    <property type="entry name" value="infA"/>
    <property type="match status" value="1"/>
</dbReference>
<dbReference type="PANTHER" id="PTHR33370">
    <property type="entry name" value="TRANSLATION INITIATION FACTOR IF-1, CHLOROPLASTIC"/>
    <property type="match status" value="1"/>
</dbReference>
<dbReference type="PANTHER" id="PTHR33370:SF1">
    <property type="entry name" value="TRANSLATION INITIATION FACTOR IF-1, CHLOROPLASTIC"/>
    <property type="match status" value="1"/>
</dbReference>
<dbReference type="Pfam" id="PF01176">
    <property type="entry name" value="eIF-1a"/>
    <property type="match status" value="1"/>
</dbReference>
<dbReference type="SMART" id="SM00316">
    <property type="entry name" value="S1"/>
    <property type="match status" value="1"/>
</dbReference>
<dbReference type="SUPFAM" id="SSF50249">
    <property type="entry name" value="Nucleic acid-binding proteins"/>
    <property type="match status" value="1"/>
</dbReference>
<dbReference type="PROSITE" id="PS50832">
    <property type="entry name" value="S1_IF1_TYPE"/>
    <property type="match status" value="1"/>
</dbReference>
<proteinExistence type="inferred from homology"/>
<sequence>MAKEDNIEMQGTVLDTLPNTMFRVELENGHVVTAHISGKMRKNYIRILTGDKVTVELTPYDLSKGRIVFRSR</sequence>